<comment type="function">
    <text evidence="1">Seems to be required for the assembly of the photosystem I complex.</text>
</comment>
<comment type="subcellular location">
    <subcellularLocation>
        <location evidence="1">Plastid</location>
        <location evidence="1">Chloroplast thylakoid membrane</location>
        <topology evidence="1">Multi-pass membrane protein</topology>
    </subcellularLocation>
</comment>
<comment type="similarity">
    <text evidence="1">Belongs to the Ycf4 family.</text>
</comment>
<geneLocation type="chloroplast"/>
<proteinExistence type="inferred from homology"/>
<sequence>MRTYISGSRRLSNIFWALTITLGGLGFFLNGCSSYFNTNLLIFSDASSIAFIPQGIILMFYGTVALILGLFLCLTIIWDVGFGYNDYNADQITVYRKGFPGKNRELNLTFPSEVVKSIKVRVTEGLNPRRQLFLCLKDSREIPLTGVDQPAALNKIENEAVTLAKYLNVFLETE</sequence>
<evidence type="ECO:0000255" key="1">
    <source>
        <dbReference type="HAMAP-Rule" id="MF_00437"/>
    </source>
</evidence>
<gene>
    <name evidence="1" type="primary">ycf4</name>
</gene>
<organism>
    <name type="scientific">Emiliania huxleyi</name>
    <name type="common">Coccolithophore</name>
    <name type="synonym">Pontosphaera huxleyi</name>
    <dbReference type="NCBI Taxonomy" id="2903"/>
    <lineage>
        <taxon>Eukaryota</taxon>
        <taxon>Haptista</taxon>
        <taxon>Haptophyta</taxon>
        <taxon>Prymnesiophyceae</taxon>
        <taxon>Isochrysidales</taxon>
        <taxon>Noelaerhabdaceae</taxon>
        <taxon>Emiliania</taxon>
    </lineage>
</organism>
<feature type="chain" id="PRO_0000275682" description="Photosystem I assembly protein Ycf4">
    <location>
        <begin position="1"/>
        <end position="174"/>
    </location>
</feature>
<feature type="transmembrane region" description="Helical" evidence="1">
    <location>
        <begin position="11"/>
        <end position="31"/>
    </location>
</feature>
<feature type="transmembrane region" description="Helical" evidence="1">
    <location>
        <begin position="56"/>
        <end position="76"/>
    </location>
</feature>
<accession>Q4G3A9</accession>
<keyword id="KW-0150">Chloroplast</keyword>
<keyword id="KW-0472">Membrane</keyword>
<keyword id="KW-0602">Photosynthesis</keyword>
<keyword id="KW-0934">Plastid</keyword>
<keyword id="KW-0793">Thylakoid</keyword>
<keyword id="KW-0812">Transmembrane</keyword>
<keyword id="KW-1133">Transmembrane helix</keyword>
<name>YCF4_EMIHU</name>
<dbReference type="EMBL" id="AY741371">
    <property type="protein sequence ID" value="AAX13857.1"/>
    <property type="molecule type" value="Genomic_DNA"/>
</dbReference>
<dbReference type="RefSeq" id="YP_277358.1">
    <property type="nucleotide sequence ID" value="NC_007288.1"/>
</dbReference>
<dbReference type="STRING" id="2903.Q4G3A9"/>
<dbReference type="GeneID" id="3562433"/>
<dbReference type="GO" id="GO:0009535">
    <property type="term" value="C:chloroplast thylakoid membrane"/>
    <property type="evidence" value="ECO:0007669"/>
    <property type="project" value="UniProtKB-SubCell"/>
</dbReference>
<dbReference type="GO" id="GO:0009522">
    <property type="term" value="C:photosystem I"/>
    <property type="evidence" value="ECO:0007669"/>
    <property type="project" value="InterPro"/>
</dbReference>
<dbReference type="GO" id="GO:0015979">
    <property type="term" value="P:photosynthesis"/>
    <property type="evidence" value="ECO:0007669"/>
    <property type="project" value="UniProtKB-UniRule"/>
</dbReference>
<dbReference type="HAMAP" id="MF_00437">
    <property type="entry name" value="Ycf4"/>
    <property type="match status" value="1"/>
</dbReference>
<dbReference type="InterPro" id="IPR003359">
    <property type="entry name" value="PSI_Ycf4_assembly"/>
</dbReference>
<dbReference type="Pfam" id="PF02392">
    <property type="entry name" value="Ycf4"/>
    <property type="match status" value="1"/>
</dbReference>
<reference key="1">
    <citation type="journal article" date="2005" name="DNA Res.">
        <title>The complete plastid genome sequence of the haptophyte Emiliania huxleyi: a comparison to other plastid genomes.</title>
        <authorList>
            <person name="Sanchez-Puerta M.V."/>
            <person name="Bachvaroff T.R."/>
            <person name="Delwiche C.F."/>
        </authorList>
    </citation>
    <scope>NUCLEOTIDE SEQUENCE [LARGE SCALE GENOMIC DNA]</scope>
    <source>
        <strain>CCMP373 / CSIRO-CS-57 / BT6</strain>
    </source>
</reference>
<protein>
    <recommendedName>
        <fullName evidence="1">Photosystem I assembly protein Ycf4</fullName>
    </recommendedName>
</protein>